<sequence>MDQRQRRILGQPLSIPTSQPKQKRTSLISFFSKVSWKLRFQKREPLKNVLFILAERARDPNANKRHTAMRGLGTMAREAPDKVRKHKKIVLDLLVYGLYDPVSLEVIHESMKTLTVVLGKIQGKGLGSFFIDITLQTRTLLDDENDSLRYSAFVLFGQLAAFAGRKWKKFFTGQVKQTRDSLLIHLQDRNPQVAKACKTTFRACSPYLKLRKEYSFQSEEDQRNIKLYRQLSHYHPEILQFFYANKIL</sequence>
<name>MSTRO_MACFA</name>
<comment type="subcellular location">
    <subcellularLocation>
        <location evidence="1">Nucleus</location>
        <location evidence="1">Nucleolus</location>
    </subcellularLocation>
</comment>
<comment type="sequence caution" evidence="3">
    <conflict type="erroneous initiation">
        <sequence resource="EMBL-CDS" id="BAB83533"/>
    </conflict>
</comment>
<gene>
    <name type="primary">MRO</name>
    <name type="ORF">QtsA-10723</name>
</gene>
<dbReference type="EMBL" id="AB064991">
    <property type="protein sequence ID" value="BAB83533.1"/>
    <property type="status" value="ALT_INIT"/>
    <property type="molecule type" value="mRNA"/>
</dbReference>
<dbReference type="SMR" id="Q8WNV3"/>
<dbReference type="STRING" id="9541.ENSMFAP00000004302"/>
<dbReference type="eggNOG" id="KOG2032">
    <property type="taxonomic scope" value="Eukaryota"/>
</dbReference>
<dbReference type="Proteomes" id="UP000233100">
    <property type="component" value="Unplaced"/>
</dbReference>
<dbReference type="GO" id="GO:0005737">
    <property type="term" value="C:cytoplasm"/>
    <property type="evidence" value="ECO:0007669"/>
    <property type="project" value="TreeGrafter"/>
</dbReference>
<dbReference type="GO" id="GO:0005730">
    <property type="term" value="C:nucleolus"/>
    <property type="evidence" value="ECO:0007669"/>
    <property type="project" value="UniProtKB-SubCell"/>
</dbReference>
<dbReference type="Gene3D" id="1.25.10.10">
    <property type="entry name" value="Leucine-rich Repeat Variant"/>
    <property type="match status" value="1"/>
</dbReference>
<dbReference type="InterPro" id="IPR011989">
    <property type="entry name" value="ARM-like"/>
</dbReference>
<dbReference type="InterPro" id="IPR016024">
    <property type="entry name" value="ARM-type_fold"/>
</dbReference>
<dbReference type="InterPro" id="IPR055406">
    <property type="entry name" value="HEAT_Maestro"/>
</dbReference>
<dbReference type="InterPro" id="IPR045206">
    <property type="entry name" value="Maestro_heat-like_prot"/>
</dbReference>
<dbReference type="PANTHER" id="PTHR23120:SF39">
    <property type="entry name" value="MAESTRO"/>
    <property type="match status" value="1"/>
</dbReference>
<dbReference type="PANTHER" id="PTHR23120">
    <property type="entry name" value="MAESTRO-RELATED HEAT DOMAIN-CONTAINING"/>
    <property type="match status" value="1"/>
</dbReference>
<dbReference type="Pfam" id="PF23227">
    <property type="entry name" value="HEAT_MROH2B_C"/>
    <property type="match status" value="1"/>
</dbReference>
<dbReference type="SUPFAM" id="SSF48371">
    <property type="entry name" value="ARM repeat"/>
    <property type="match status" value="1"/>
</dbReference>
<reference key="1">
    <citation type="journal article" date="2002" name="BMC Genomics">
        <title>Cynomolgus monkey testicular cDNAs for discovery of novel human genes in the human genome sequence.</title>
        <authorList>
            <person name="Osada N."/>
            <person name="Hida M."/>
            <person name="Kusuda J."/>
            <person name="Tanuma R."/>
            <person name="Hirata M."/>
            <person name="Suto Y."/>
            <person name="Hirai M."/>
            <person name="Terao K."/>
            <person name="Sugano S."/>
            <person name="Hashimoto K."/>
        </authorList>
    </citation>
    <scope>NUCLEOTIDE SEQUENCE [LARGE SCALE MRNA]</scope>
    <source>
        <tissue>Testis</tissue>
    </source>
</reference>
<organism>
    <name type="scientific">Macaca fascicularis</name>
    <name type="common">Crab-eating macaque</name>
    <name type="synonym">Cynomolgus monkey</name>
    <dbReference type="NCBI Taxonomy" id="9541"/>
    <lineage>
        <taxon>Eukaryota</taxon>
        <taxon>Metazoa</taxon>
        <taxon>Chordata</taxon>
        <taxon>Craniata</taxon>
        <taxon>Vertebrata</taxon>
        <taxon>Euteleostomi</taxon>
        <taxon>Mammalia</taxon>
        <taxon>Eutheria</taxon>
        <taxon>Euarchontoglires</taxon>
        <taxon>Primates</taxon>
        <taxon>Haplorrhini</taxon>
        <taxon>Catarrhini</taxon>
        <taxon>Cercopithecidae</taxon>
        <taxon>Cercopithecinae</taxon>
        <taxon>Macaca</taxon>
    </lineage>
</organism>
<keyword id="KW-0539">Nucleus</keyword>
<keyword id="KW-1185">Reference proteome</keyword>
<keyword id="KW-0677">Repeat</keyword>
<protein>
    <recommendedName>
        <fullName>Protein maestro</fullName>
    </recommendedName>
    <alternativeName>
        <fullName>Male-specific transcription in the developing reproductive organs</fullName>
    </alternativeName>
</protein>
<proteinExistence type="evidence at transcript level"/>
<feature type="chain" id="PRO_0000248198" description="Protein maestro">
    <location>
        <begin position="1"/>
        <end position="248"/>
    </location>
</feature>
<feature type="repeat" description="HEAT 1">
    <location>
        <begin position="44"/>
        <end position="79"/>
    </location>
</feature>
<feature type="repeat" description="HEAT 2">
    <location>
        <begin position="128"/>
        <end position="163"/>
    </location>
</feature>
<feature type="region of interest" description="Disordered" evidence="2">
    <location>
        <begin position="1"/>
        <end position="20"/>
    </location>
</feature>
<accession>Q8WNV3</accession>
<evidence type="ECO:0000250" key="1"/>
<evidence type="ECO:0000256" key="2">
    <source>
        <dbReference type="SAM" id="MobiDB-lite"/>
    </source>
</evidence>
<evidence type="ECO:0000305" key="3"/>